<reference key="1">
    <citation type="journal article" date="2005" name="PLoS Genet.">
        <title>Life in hot carbon monoxide: the complete genome sequence of Carboxydothermus hydrogenoformans Z-2901.</title>
        <authorList>
            <person name="Wu M."/>
            <person name="Ren Q."/>
            <person name="Durkin A.S."/>
            <person name="Daugherty S.C."/>
            <person name="Brinkac L.M."/>
            <person name="Dodson R.J."/>
            <person name="Madupu R."/>
            <person name="Sullivan S.A."/>
            <person name="Kolonay J.F."/>
            <person name="Nelson W.C."/>
            <person name="Tallon L.J."/>
            <person name="Jones K.M."/>
            <person name="Ulrich L.E."/>
            <person name="Gonzalez J.M."/>
            <person name="Zhulin I.B."/>
            <person name="Robb F.T."/>
            <person name="Eisen J.A."/>
        </authorList>
    </citation>
    <scope>NUCLEOTIDE SEQUENCE [LARGE SCALE GENOMIC DNA]</scope>
    <source>
        <strain>ATCC BAA-161 / DSM 6008 / Z-2901</strain>
    </source>
</reference>
<keyword id="KW-0143">Chaperone</keyword>
<keyword id="KW-0963">Cytoplasm</keyword>
<keyword id="KW-1185">Reference proteome</keyword>
<keyword id="KW-0346">Stress response</keyword>
<accession>Q3AF09</accession>
<organism>
    <name type="scientific">Carboxydothermus hydrogenoformans (strain ATCC BAA-161 / DSM 6008 / Z-2901)</name>
    <dbReference type="NCBI Taxonomy" id="246194"/>
    <lineage>
        <taxon>Bacteria</taxon>
        <taxon>Bacillati</taxon>
        <taxon>Bacillota</taxon>
        <taxon>Clostridia</taxon>
        <taxon>Thermoanaerobacterales</taxon>
        <taxon>Thermoanaerobacteraceae</taxon>
        <taxon>Carboxydothermus</taxon>
    </lineage>
</organism>
<sequence>MEEKDKEEKVTGENLEPEDKNLEQEDKEEVVGPQEEQQIDEAKNWEEEYNKLLDEHNRLKNQYLRLYADFDNYRKRTQREKEELLKYEGMEFLKKLLPVLDNFERALKEKDTDPQKVIEGVELTHRQLLEILNQHEVKAIEAQGQPFNPELHEALMVEVREDLEENTVIEELVKGYFYKDKVLRPALVKVSKKQ</sequence>
<gene>
    <name evidence="1" type="primary">grpE</name>
    <name type="ordered locus">CHY_0414</name>
</gene>
<feature type="chain" id="PRO_1000164183" description="Protein GrpE">
    <location>
        <begin position="1"/>
        <end position="194"/>
    </location>
</feature>
<feature type="region of interest" description="Disordered" evidence="2">
    <location>
        <begin position="1"/>
        <end position="41"/>
    </location>
</feature>
<feature type="compositionally biased region" description="Basic and acidic residues" evidence="2">
    <location>
        <begin position="1"/>
        <end position="24"/>
    </location>
</feature>
<dbReference type="EMBL" id="CP000141">
    <property type="protein sequence ID" value="ABB15850.1"/>
    <property type="molecule type" value="Genomic_DNA"/>
</dbReference>
<dbReference type="RefSeq" id="WP_011343351.1">
    <property type="nucleotide sequence ID" value="NC_007503.1"/>
</dbReference>
<dbReference type="SMR" id="Q3AF09"/>
<dbReference type="FunCoup" id="Q3AF09">
    <property type="interactions" value="407"/>
</dbReference>
<dbReference type="STRING" id="246194.CHY_0414"/>
<dbReference type="KEGG" id="chy:CHY_0414"/>
<dbReference type="eggNOG" id="COG0576">
    <property type="taxonomic scope" value="Bacteria"/>
</dbReference>
<dbReference type="HOGENOM" id="CLU_057217_5_2_9"/>
<dbReference type="InParanoid" id="Q3AF09"/>
<dbReference type="OrthoDB" id="9812586at2"/>
<dbReference type="Proteomes" id="UP000002706">
    <property type="component" value="Chromosome"/>
</dbReference>
<dbReference type="GO" id="GO:0005737">
    <property type="term" value="C:cytoplasm"/>
    <property type="evidence" value="ECO:0007669"/>
    <property type="project" value="UniProtKB-SubCell"/>
</dbReference>
<dbReference type="GO" id="GO:0000774">
    <property type="term" value="F:adenyl-nucleotide exchange factor activity"/>
    <property type="evidence" value="ECO:0007669"/>
    <property type="project" value="InterPro"/>
</dbReference>
<dbReference type="GO" id="GO:0042803">
    <property type="term" value="F:protein homodimerization activity"/>
    <property type="evidence" value="ECO:0007669"/>
    <property type="project" value="InterPro"/>
</dbReference>
<dbReference type="GO" id="GO:0051087">
    <property type="term" value="F:protein-folding chaperone binding"/>
    <property type="evidence" value="ECO:0007669"/>
    <property type="project" value="InterPro"/>
</dbReference>
<dbReference type="GO" id="GO:0051082">
    <property type="term" value="F:unfolded protein binding"/>
    <property type="evidence" value="ECO:0007669"/>
    <property type="project" value="TreeGrafter"/>
</dbReference>
<dbReference type="GO" id="GO:0006457">
    <property type="term" value="P:protein folding"/>
    <property type="evidence" value="ECO:0007669"/>
    <property type="project" value="InterPro"/>
</dbReference>
<dbReference type="CDD" id="cd00446">
    <property type="entry name" value="GrpE"/>
    <property type="match status" value="1"/>
</dbReference>
<dbReference type="FunFam" id="2.30.22.10:FF:000001">
    <property type="entry name" value="Protein GrpE"/>
    <property type="match status" value="1"/>
</dbReference>
<dbReference type="Gene3D" id="3.90.20.20">
    <property type="match status" value="1"/>
</dbReference>
<dbReference type="Gene3D" id="2.30.22.10">
    <property type="entry name" value="Head domain of nucleotide exchange factor GrpE"/>
    <property type="match status" value="1"/>
</dbReference>
<dbReference type="HAMAP" id="MF_01151">
    <property type="entry name" value="GrpE"/>
    <property type="match status" value="1"/>
</dbReference>
<dbReference type="InterPro" id="IPR000740">
    <property type="entry name" value="GrpE"/>
</dbReference>
<dbReference type="InterPro" id="IPR013805">
    <property type="entry name" value="GrpE_coiled_coil"/>
</dbReference>
<dbReference type="InterPro" id="IPR009012">
    <property type="entry name" value="GrpE_head"/>
</dbReference>
<dbReference type="NCBIfam" id="NF010738">
    <property type="entry name" value="PRK14140.1"/>
    <property type="match status" value="1"/>
</dbReference>
<dbReference type="PANTHER" id="PTHR21237">
    <property type="entry name" value="GRPE PROTEIN"/>
    <property type="match status" value="1"/>
</dbReference>
<dbReference type="PANTHER" id="PTHR21237:SF23">
    <property type="entry name" value="GRPE PROTEIN HOMOLOG, MITOCHONDRIAL"/>
    <property type="match status" value="1"/>
</dbReference>
<dbReference type="Pfam" id="PF01025">
    <property type="entry name" value="GrpE"/>
    <property type="match status" value="1"/>
</dbReference>
<dbReference type="PRINTS" id="PR00773">
    <property type="entry name" value="GRPEPROTEIN"/>
</dbReference>
<dbReference type="SUPFAM" id="SSF58014">
    <property type="entry name" value="Coiled-coil domain of nucleotide exchange factor GrpE"/>
    <property type="match status" value="1"/>
</dbReference>
<dbReference type="SUPFAM" id="SSF51064">
    <property type="entry name" value="Head domain of nucleotide exchange factor GrpE"/>
    <property type="match status" value="1"/>
</dbReference>
<dbReference type="PROSITE" id="PS01071">
    <property type="entry name" value="GRPE"/>
    <property type="match status" value="1"/>
</dbReference>
<protein>
    <recommendedName>
        <fullName evidence="1">Protein GrpE</fullName>
    </recommendedName>
    <alternativeName>
        <fullName evidence="1">HSP-70 cofactor</fullName>
    </alternativeName>
</protein>
<proteinExistence type="inferred from homology"/>
<evidence type="ECO:0000255" key="1">
    <source>
        <dbReference type="HAMAP-Rule" id="MF_01151"/>
    </source>
</evidence>
<evidence type="ECO:0000256" key="2">
    <source>
        <dbReference type="SAM" id="MobiDB-lite"/>
    </source>
</evidence>
<name>GRPE_CARHZ</name>
<comment type="function">
    <text evidence="1">Participates actively in the response to hyperosmotic and heat shock by preventing the aggregation of stress-denatured proteins, in association with DnaK and GrpE. It is the nucleotide exchange factor for DnaK and may function as a thermosensor. Unfolded proteins bind initially to DnaJ; upon interaction with the DnaJ-bound protein, DnaK hydrolyzes its bound ATP, resulting in the formation of a stable complex. GrpE releases ADP from DnaK; ATP binding to DnaK triggers the release of the substrate protein, thus completing the reaction cycle. Several rounds of ATP-dependent interactions between DnaJ, DnaK and GrpE are required for fully efficient folding.</text>
</comment>
<comment type="subunit">
    <text evidence="1">Homodimer.</text>
</comment>
<comment type="subcellular location">
    <subcellularLocation>
        <location evidence="1">Cytoplasm</location>
    </subcellularLocation>
</comment>
<comment type="similarity">
    <text evidence="1">Belongs to the GrpE family.</text>
</comment>